<name>PAEA_HAEIN</name>
<organism>
    <name type="scientific">Haemophilus influenzae (strain ATCC 51907 / DSM 11121 / KW20 / Rd)</name>
    <dbReference type="NCBI Taxonomy" id="71421"/>
    <lineage>
        <taxon>Bacteria</taxon>
        <taxon>Pseudomonadati</taxon>
        <taxon>Pseudomonadota</taxon>
        <taxon>Gammaproteobacteria</taxon>
        <taxon>Pasteurellales</taxon>
        <taxon>Pasteurellaceae</taxon>
        <taxon>Haemophilus</taxon>
    </lineage>
</organism>
<dbReference type="EMBL" id="L42023">
    <property type="protein sequence ID" value="AAC22110.1"/>
    <property type="molecule type" value="Genomic_DNA"/>
</dbReference>
<dbReference type="PIR" id="H64152">
    <property type="entry name" value="H64152"/>
</dbReference>
<dbReference type="RefSeq" id="NP_438613.1">
    <property type="nucleotide sequence ID" value="NC_000907.1"/>
</dbReference>
<dbReference type="SMR" id="P44717"/>
<dbReference type="STRING" id="71421.HI_0452"/>
<dbReference type="EnsemblBacteria" id="AAC22110">
    <property type="protein sequence ID" value="AAC22110"/>
    <property type="gene ID" value="HI_0452"/>
</dbReference>
<dbReference type="KEGG" id="hin:HI_0452"/>
<dbReference type="PATRIC" id="fig|71421.8.peg.472"/>
<dbReference type="eggNOG" id="COG1253">
    <property type="taxonomic scope" value="Bacteria"/>
</dbReference>
<dbReference type="HOGENOM" id="CLU_015237_4_0_6"/>
<dbReference type="OrthoDB" id="9797674at2"/>
<dbReference type="PhylomeDB" id="P44717"/>
<dbReference type="BioCyc" id="HINF71421:G1GJ1-468-MONOMER"/>
<dbReference type="Proteomes" id="UP000000579">
    <property type="component" value="Chromosome"/>
</dbReference>
<dbReference type="GO" id="GO:0005886">
    <property type="term" value="C:plasma membrane"/>
    <property type="evidence" value="ECO:0000318"/>
    <property type="project" value="GO_Central"/>
</dbReference>
<dbReference type="GO" id="GO:0050660">
    <property type="term" value="F:flavin adenine dinucleotide binding"/>
    <property type="evidence" value="ECO:0007669"/>
    <property type="project" value="InterPro"/>
</dbReference>
<dbReference type="CDD" id="cd04590">
    <property type="entry name" value="CBS_pair_CorC_HlyC_assoc"/>
    <property type="match status" value="1"/>
</dbReference>
<dbReference type="FunFam" id="3.10.580.10:FF:000005">
    <property type="entry name" value="HlyC/CorC family transporter"/>
    <property type="match status" value="1"/>
</dbReference>
<dbReference type="Gene3D" id="3.30.465.10">
    <property type="match status" value="1"/>
</dbReference>
<dbReference type="Gene3D" id="3.10.580.10">
    <property type="entry name" value="CBS-domain"/>
    <property type="match status" value="1"/>
</dbReference>
<dbReference type="InterPro" id="IPR000644">
    <property type="entry name" value="CBS_dom"/>
</dbReference>
<dbReference type="InterPro" id="IPR046342">
    <property type="entry name" value="CBS_dom_sf"/>
</dbReference>
<dbReference type="InterPro" id="IPR002550">
    <property type="entry name" value="CNNM"/>
</dbReference>
<dbReference type="InterPro" id="IPR036318">
    <property type="entry name" value="FAD-bd_PCMH-like_sf"/>
</dbReference>
<dbReference type="InterPro" id="IPR016169">
    <property type="entry name" value="FAD-bd_PCMH_sub2"/>
</dbReference>
<dbReference type="InterPro" id="IPR044751">
    <property type="entry name" value="Ion_transp-like_CBS"/>
</dbReference>
<dbReference type="InterPro" id="IPR005170">
    <property type="entry name" value="Transptr-assoc_dom"/>
</dbReference>
<dbReference type="PANTHER" id="PTHR22777">
    <property type="entry name" value="HEMOLYSIN-RELATED"/>
    <property type="match status" value="1"/>
</dbReference>
<dbReference type="PANTHER" id="PTHR22777:SF16">
    <property type="entry name" value="POLYAMINE EXPORT PROTEIN"/>
    <property type="match status" value="1"/>
</dbReference>
<dbReference type="Pfam" id="PF00571">
    <property type="entry name" value="CBS"/>
    <property type="match status" value="1"/>
</dbReference>
<dbReference type="Pfam" id="PF01595">
    <property type="entry name" value="CNNM"/>
    <property type="match status" value="1"/>
</dbReference>
<dbReference type="Pfam" id="PF03471">
    <property type="entry name" value="CorC_HlyC"/>
    <property type="match status" value="1"/>
</dbReference>
<dbReference type="SMART" id="SM01091">
    <property type="entry name" value="CorC_HlyC"/>
    <property type="match status" value="1"/>
</dbReference>
<dbReference type="SUPFAM" id="SSF54631">
    <property type="entry name" value="CBS-domain pair"/>
    <property type="match status" value="1"/>
</dbReference>
<dbReference type="SUPFAM" id="SSF56176">
    <property type="entry name" value="FAD-binding/transporter-associated domain-like"/>
    <property type="match status" value="1"/>
</dbReference>
<dbReference type="PROSITE" id="PS51371">
    <property type="entry name" value="CBS"/>
    <property type="match status" value="2"/>
</dbReference>
<dbReference type="PROSITE" id="PS51846">
    <property type="entry name" value="CNNM"/>
    <property type="match status" value="1"/>
</dbReference>
<accession>P44717</accession>
<reference key="1">
    <citation type="journal article" date="1995" name="Science">
        <title>Whole-genome random sequencing and assembly of Haemophilus influenzae Rd.</title>
        <authorList>
            <person name="Fleischmann R.D."/>
            <person name="Adams M.D."/>
            <person name="White O."/>
            <person name="Clayton R.A."/>
            <person name="Kirkness E.F."/>
            <person name="Kerlavage A.R."/>
            <person name="Bult C.J."/>
            <person name="Tomb J.-F."/>
            <person name="Dougherty B.A."/>
            <person name="Merrick J.M."/>
            <person name="McKenney K."/>
            <person name="Sutton G.G."/>
            <person name="FitzHugh W."/>
            <person name="Fields C.A."/>
            <person name="Gocayne J.D."/>
            <person name="Scott J.D."/>
            <person name="Shirley R."/>
            <person name="Liu L.-I."/>
            <person name="Glodek A."/>
            <person name="Kelley J.M."/>
            <person name="Weidman J.F."/>
            <person name="Phillips C.A."/>
            <person name="Spriggs T."/>
            <person name="Hedblom E."/>
            <person name="Cotton M.D."/>
            <person name="Utterback T.R."/>
            <person name="Hanna M.C."/>
            <person name="Nguyen D.T."/>
            <person name="Saudek D.M."/>
            <person name="Brandon R.C."/>
            <person name="Fine L.D."/>
            <person name="Fritchman J.L."/>
            <person name="Fuhrmann J.L."/>
            <person name="Geoghagen N.S.M."/>
            <person name="Gnehm C.L."/>
            <person name="McDonald L.A."/>
            <person name="Small K.V."/>
            <person name="Fraser C.M."/>
            <person name="Smith H.O."/>
            <person name="Venter J.C."/>
        </authorList>
    </citation>
    <scope>NUCLEOTIDE SEQUENCE [LARGE SCALE GENOMIC DNA]</scope>
    <source>
        <strain>ATCC 51907 / DSM 11121 / KW20 / Rd</strain>
    </source>
</reference>
<gene>
    <name evidence="1" type="primary">paeA</name>
    <name type="ordered locus">HI_0452</name>
</gene>
<protein>
    <recommendedName>
        <fullName evidence="1">Polyamine export protein</fullName>
    </recommendedName>
</protein>
<feature type="chain" id="PRO_0000088365" description="Polyamine export protein">
    <location>
        <begin position="1"/>
        <end position="432"/>
    </location>
</feature>
<feature type="transmembrane region" description="Helical" evidence="3">
    <location>
        <begin position="2"/>
        <end position="22"/>
    </location>
</feature>
<feature type="transmembrane region" description="Helical" evidence="3">
    <location>
        <begin position="61"/>
        <end position="81"/>
    </location>
</feature>
<feature type="transmembrane region" description="Helical" evidence="3">
    <location>
        <begin position="100"/>
        <end position="120"/>
    </location>
</feature>
<feature type="transmembrane region" description="Helical" evidence="3">
    <location>
        <begin position="138"/>
        <end position="158"/>
    </location>
</feature>
<feature type="domain" description="CNNM transmembrane" evidence="5">
    <location>
        <begin position="1"/>
        <end position="201"/>
    </location>
</feature>
<feature type="domain" description="CBS 1" evidence="4">
    <location>
        <begin position="220"/>
        <end position="279"/>
    </location>
</feature>
<feature type="domain" description="CBS 2" evidence="4">
    <location>
        <begin position="286"/>
        <end position="345"/>
    </location>
</feature>
<sequence length="432" mass="48708">MIMELFHTILAIVALILSSAVVSSAEISLASPRKLKLQSLANKGDVRPLQVLKLQEHPGRFITVVQILLNMVAILGGGIGESALSPYIADILNRSFEGSWIAPTASTIAFILVTCLFILFADLIPKRIAITYPEMVALSVVGIMNFSMYVFKPLVWFFDTIANVFFRLFRISTVREDGMTSEDIFAVVEAGAEAGVLKTQEHYLIENIFDMQARTVTSTMTTRENIVYLDRTFSRQEVMDTLSRDSHSKIVICDNGLDKILGYIESHTLLTMYLQNENVVLTDPKLLRKALFVPDTLSLYEVLELFKSTGEDFAIIVNEYALVVGIVTLNDVMSIVMGELVSNEEEYIVSRDENSWLIDGATPLEEVTRVLDIAYFPDEENYETISGFMMYMLRKIPKKTDSVVYGKYKFEVIDTENFKIDQILVSLVKEQE</sequence>
<comment type="function">
    <text evidence="1">Involved in cadaverine and putrescine tolerance in stationary phase. May facilitate the efflux of both cadaverine and putrescine from the cytoplasm, reducing potentially toxic levels under certain stress conditions.</text>
</comment>
<comment type="subcellular location">
    <subcellularLocation>
        <location evidence="2">Cell inner membrane</location>
        <topology evidence="6">Multi-pass membrane protein</topology>
    </subcellularLocation>
</comment>
<comment type="similarity">
    <text evidence="6">Belongs to the UPF0053 family. PaeA subfamily.</text>
</comment>
<proteinExistence type="inferred from homology"/>
<keyword id="KW-0129">CBS domain</keyword>
<keyword id="KW-0997">Cell inner membrane</keyword>
<keyword id="KW-1003">Cell membrane</keyword>
<keyword id="KW-0472">Membrane</keyword>
<keyword id="KW-1185">Reference proteome</keyword>
<keyword id="KW-0677">Repeat</keyword>
<keyword id="KW-0812">Transmembrane</keyword>
<keyword id="KW-1133">Transmembrane helix</keyword>
<keyword id="KW-0813">Transport</keyword>
<evidence type="ECO:0000250" key="1">
    <source>
        <dbReference type="UniProtKB" id="A0A0F6BAS6"/>
    </source>
</evidence>
<evidence type="ECO:0000250" key="2">
    <source>
        <dbReference type="UniProtKB" id="P0AE45"/>
    </source>
</evidence>
<evidence type="ECO:0000255" key="3"/>
<evidence type="ECO:0000255" key="4">
    <source>
        <dbReference type="PROSITE-ProRule" id="PRU00703"/>
    </source>
</evidence>
<evidence type="ECO:0000255" key="5">
    <source>
        <dbReference type="PROSITE-ProRule" id="PRU01193"/>
    </source>
</evidence>
<evidence type="ECO:0000305" key="6"/>